<sequence>MHLVVCIKQVPDSAQIRVHPVTNTIMRQGVPTIINPHDLAALEEALKLCDTYGGEVTVVTMGPKMAEDALRKALTFGAHRAVLLTDRHFAGSDTLATSFALAQAIAEIGETFGTPDVVFTGKQTIDGDTAQVGPGIAKRLDLQQLTYVAKILSIDAASREITVERRAEGGSQILRTGLPCLVTMLDGADAIRRGRLDDALRAARTKVVKWSAADAGIAEPANCGLRGSPTVVKRVFAPTSREQKARQIDTTNKPLREIADGLIAAIFADRPALKHDLGSTGQQGAPDVDRES</sequence>
<geneLocation type="plasmid">
    <name>pSymA</name>
    <name>megaplasmid 1</name>
</geneLocation>
<organism>
    <name type="scientific">Rhizobium meliloti (strain 1021)</name>
    <name type="common">Ensifer meliloti</name>
    <name type="synonym">Sinorhizobium meliloti</name>
    <dbReference type="NCBI Taxonomy" id="266834"/>
    <lineage>
        <taxon>Bacteria</taxon>
        <taxon>Pseudomonadati</taxon>
        <taxon>Pseudomonadota</taxon>
        <taxon>Alphaproteobacteria</taxon>
        <taxon>Hyphomicrobiales</taxon>
        <taxon>Rhizobiaceae</taxon>
        <taxon>Sinorhizobium/Ensifer group</taxon>
        <taxon>Sinorhizobium</taxon>
    </lineage>
</organism>
<proteinExistence type="inferred from homology"/>
<comment type="function">
    <text>May play a role in a redox process involved in nitrogen fixation.</text>
</comment>
<comment type="subunit">
    <text evidence="1">FixA and FixB form a heterodimer.</text>
</comment>
<comment type="similarity">
    <text evidence="1">Belongs to the ETF beta-subunit/FixA family.</text>
</comment>
<reference key="1">
    <citation type="journal article" date="1987" name="J. Bacteriol.">
        <title>Genetic and structural analysis of the Rhizobium meliloti fixA, fixB, fixC, and fixX genes.</title>
        <authorList>
            <person name="Earl C.D."/>
            <person name="Ronson C.W."/>
            <person name="Ausubel F.M."/>
        </authorList>
    </citation>
    <scope>NUCLEOTIDE SEQUENCE [GENOMIC DNA]</scope>
    <source>
        <strain>1021</strain>
    </source>
</reference>
<reference key="2">
    <citation type="journal article" date="2001" name="Proc. Natl. Acad. Sci. U.S.A.">
        <title>Nucleotide sequence and predicted functions of the entire Sinorhizobium meliloti pSymA megaplasmid.</title>
        <authorList>
            <person name="Barnett M.J."/>
            <person name="Fisher R.F."/>
            <person name="Jones T."/>
            <person name="Komp C."/>
            <person name="Abola A.P."/>
            <person name="Barloy-Hubler F."/>
            <person name="Bowser L."/>
            <person name="Capela D."/>
            <person name="Galibert F."/>
            <person name="Gouzy J."/>
            <person name="Gurjal M."/>
            <person name="Hong A."/>
            <person name="Huizar L."/>
            <person name="Hyman R.W."/>
            <person name="Kahn D."/>
            <person name="Kahn M.L."/>
            <person name="Kalman S."/>
            <person name="Keating D.H."/>
            <person name="Palm C."/>
            <person name="Peck M.C."/>
            <person name="Surzycki R."/>
            <person name="Wells D.H."/>
            <person name="Yeh K.-C."/>
            <person name="Davis R.W."/>
            <person name="Federspiel N.A."/>
            <person name="Long S.R."/>
        </authorList>
    </citation>
    <scope>NUCLEOTIDE SEQUENCE [LARGE SCALE GENOMIC DNA]</scope>
    <source>
        <strain>1021</strain>
    </source>
</reference>
<reference key="3">
    <citation type="journal article" date="2001" name="Science">
        <title>The composite genome of the legume symbiont Sinorhizobium meliloti.</title>
        <authorList>
            <person name="Galibert F."/>
            <person name="Finan T.M."/>
            <person name="Long S.R."/>
            <person name="Puehler A."/>
            <person name="Abola P."/>
            <person name="Ampe F."/>
            <person name="Barloy-Hubler F."/>
            <person name="Barnett M.J."/>
            <person name="Becker A."/>
            <person name="Boistard P."/>
            <person name="Bothe G."/>
            <person name="Boutry M."/>
            <person name="Bowser L."/>
            <person name="Buhrmester J."/>
            <person name="Cadieu E."/>
            <person name="Capela D."/>
            <person name="Chain P."/>
            <person name="Cowie A."/>
            <person name="Davis R.W."/>
            <person name="Dreano S."/>
            <person name="Federspiel N.A."/>
            <person name="Fisher R.F."/>
            <person name="Gloux S."/>
            <person name="Godrie T."/>
            <person name="Goffeau A."/>
            <person name="Golding B."/>
            <person name="Gouzy J."/>
            <person name="Gurjal M."/>
            <person name="Hernandez-Lucas I."/>
            <person name="Hong A."/>
            <person name="Huizar L."/>
            <person name="Hyman R.W."/>
            <person name="Jones T."/>
            <person name="Kahn D."/>
            <person name="Kahn M.L."/>
            <person name="Kalman S."/>
            <person name="Keating D.H."/>
            <person name="Kiss E."/>
            <person name="Komp C."/>
            <person name="Lelaure V."/>
            <person name="Masuy D."/>
            <person name="Palm C."/>
            <person name="Peck M.C."/>
            <person name="Pohl T.M."/>
            <person name="Portetelle D."/>
            <person name="Purnelle B."/>
            <person name="Ramsperger U."/>
            <person name="Surzycki R."/>
            <person name="Thebault P."/>
            <person name="Vandenbol M."/>
            <person name="Vorhoelter F.J."/>
            <person name="Weidner S."/>
            <person name="Wells D.H."/>
            <person name="Wong K."/>
            <person name="Yeh K.-C."/>
            <person name="Batut J."/>
        </authorList>
    </citation>
    <scope>NUCLEOTIDE SEQUENCE [LARGE SCALE GENOMIC DNA]</scope>
    <source>
        <strain>1021</strain>
    </source>
</reference>
<reference key="4">
    <citation type="journal article" date="1983" name="Cell">
        <title>Structural relationships among Rhizobium meliloti symbiotic promoters.</title>
        <authorList>
            <person name="Better M."/>
            <person name="Lewis B."/>
            <person name="Corbin D."/>
            <person name="Ditta G.S."/>
            <person name="Helinski D.R."/>
        </authorList>
    </citation>
    <scope>NUCLEOTIDE SEQUENCE [GENOMIC DNA] OF 1-11</scope>
</reference>
<feature type="chain" id="PRO_0000167890" description="Protein FixA">
    <location>
        <begin position="1"/>
        <end position="292"/>
    </location>
</feature>
<keyword id="KW-0249">Electron transport</keyword>
<keyword id="KW-0535">Nitrogen fixation</keyword>
<keyword id="KW-0614">Plasmid</keyword>
<keyword id="KW-1185">Reference proteome</keyword>
<keyword id="KW-0813">Transport</keyword>
<name>FIXA_RHIME</name>
<protein>
    <recommendedName>
        <fullName>Protein FixA</fullName>
    </recommendedName>
</protein>
<gene>
    <name type="primary">fixA</name>
    <name type="ordered locus">RA0447</name>
    <name type="ORF">SMa0822</name>
</gene>
<accession>P09818</accession>
<evidence type="ECO:0000305" key="1"/>
<dbReference type="EMBL" id="M15546">
    <property type="protein sequence ID" value="AAA21768.1"/>
    <property type="molecule type" value="Genomic_DNA"/>
</dbReference>
<dbReference type="EMBL" id="AE006469">
    <property type="protein sequence ID" value="AAK65105.1"/>
    <property type="molecule type" value="Genomic_DNA"/>
</dbReference>
<dbReference type="EMBL" id="AH000925">
    <property type="protein sequence ID" value="AAA26331.2"/>
    <property type="molecule type" value="Genomic_DNA"/>
</dbReference>
<dbReference type="PIR" id="A26952">
    <property type="entry name" value="A26952"/>
</dbReference>
<dbReference type="PIR" id="G95317">
    <property type="entry name" value="G95317"/>
</dbReference>
<dbReference type="RefSeq" id="NP_435693.1">
    <property type="nucleotide sequence ID" value="NC_003037.1"/>
</dbReference>
<dbReference type="RefSeq" id="WP_003532767.1">
    <property type="nucleotide sequence ID" value="NC_003037.1"/>
</dbReference>
<dbReference type="SMR" id="P09818"/>
<dbReference type="EnsemblBacteria" id="AAK65105">
    <property type="protein sequence ID" value="AAK65105"/>
    <property type="gene ID" value="SMa0822"/>
</dbReference>
<dbReference type="KEGG" id="sme:SMa0822"/>
<dbReference type="PATRIC" id="fig|266834.11.peg.460"/>
<dbReference type="HOGENOM" id="CLU_060196_2_1_5"/>
<dbReference type="OrthoDB" id="9804960at2"/>
<dbReference type="Proteomes" id="UP000001976">
    <property type="component" value="Plasmid pSymA"/>
</dbReference>
<dbReference type="GO" id="GO:0009055">
    <property type="term" value="F:electron transfer activity"/>
    <property type="evidence" value="ECO:0007669"/>
    <property type="project" value="InterPro"/>
</dbReference>
<dbReference type="GO" id="GO:0009399">
    <property type="term" value="P:nitrogen fixation"/>
    <property type="evidence" value="ECO:0007669"/>
    <property type="project" value="UniProtKB-KW"/>
</dbReference>
<dbReference type="CDD" id="cd01714">
    <property type="entry name" value="ETF_beta"/>
    <property type="match status" value="1"/>
</dbReference>
<dbReference type="Gene3D" id="3.40.50.620">
    <property type="entry name" value="HUPs"/>
    <property type="match status" value="1"/>
</dbReference>
<dbReference type="InterPro" id="IPR000049">
    <property type="entry name" value="ET-Flavoprotein_bsu_CS"/>
</dbReference>
<dbReference type="InterPro" id="IPR014730">
    <property type="entry name" value="ETF_a/b_N"/>
</dbReference>
<dbReference type="InterPro" id="IPR012255">
    <property type="entry name" value="ETF_b"/>
</dbReference>
<dbReference type="InterPro" id="IPR033948">
    <property type="entry name" value="ETF_beta_N"/>
</dbReference>
<dbReference type="InterPro" id="IPR014729">
    <property type="entry name" value="Rossmann-like_a/b/a_fold"/>
</dbReference>
<dbReference type="PANTHER" id="PTHR21294">
    <property type="entry name" value="ELECTRON TRANSFER FLAVOPROTEIN BETA-SUBUNIT"/>
    <property type="match status" value="1"/>
</dbReference>
<dbReference type="PANTHER" id="PTHR21294:SF17">
    <property type="entry name" value="PROTEIN FIXA"/>
    <property type="match status" value="1"/>
</dbReference>
<dbReference type="Pfam" id="PF01012">
    <property type="entry name" value="ETF"/>
    <property type="match status" value="1"/>
</dbReference>
<dbReference type="PIRSF" id="PIRSF000090">
    <property type="entry name" value="Beta-ETF"/>
    <property type="match status" value="1"/>
</dbReference>
<dbReference type="SMART" id="SM00893">
    <property type="entry name" value="ETF"/>
    <property type="match status" value="1"/>
</dbReference>
<dbReference type="SUPFAM" id="SSF52402">
    <property type="entry name" value="Adenine nucleotide alpha hydrolases-like"/>
    <property type="match status" value="1"/>
</dbReference>
<dbReference type="PROSITE" id="PS01065">
    <property type="entry name" value="ETF_BETA"/>
    <property type="match status" value="1"/>
</dbReference>